<feature type="chain" id="PRO_0000242909" description="tRNA uridine(34) hydroxylase">
    <location>
        <begin position="1"/>
        <end position="279"/>
    </location>
</feature>
<feature type="domain" description="Rhodanese" evidence="1">
    <location>
        <begin position="126"/>
        <end position="221"/>
    </location>
</feature>
<feature type="active site" description="Cysteine persulfide intermediate" evidence="1">
    <location>
        <position position="181"/>
    </location>
</feature>
<reference key="1">
    <citation type="journal article" date="2006" name="PLoS Genet.">
        <title>Comparative genomics of emerging human ehrlichiosis agents.</title>
        <authorList>
            <person name="Dunning Hotopp J.C."/>
            <person name="Lin M."/>
            <person name="Madupu R."/>
            <person name="Crabtree J."/>
            <person name="Angiuoli S.V."/>
            <person name="Eisen J.A."/>
            <person name="Seshadri R."/>
            <person name="Ren Q."/>
            <person name="Wu M."/>
            <person name="Utterback T.R."/>
            <person name="Smith S."/>
            <person name="Lewis M."/>
            <person name="Khouri H."/>
            <person name="Zhang C."/>
            <person name="Niu H."/>
            <person name="Lin Q."/>
            <person name="Ohashi N."/>
            <person name="Zhi N."/>
            <person name="Nelson W.C."/>
            <person name="Brinkac L.M."/>
            <person name="Dodson R.J."/>
            <person name="Rosovitz M.J."/>
            <person name="Sundaram J.P."/>
            <person name="Daugherty S.C."/>
            <person name="Davidsen T."/>
            <person name="Durkin A.S."/>
            <person name="Gwinn M.L."/>
            <person name="Haft D.H."/>
            <person name="Selengut J.D."/>
            <person name="Sullivan S.A."/>
            <person name="Zafar N."/>
            <person name="Zhou L."/>
            <person name="Benahmed F."/>
            <person name="Forberger H."/>
            <person name="Halpin R."/>
            <person name="Mulligan S."/>
            <person name="Robinson J."/>
            <person name="White O."/>
            <person name="Rikihisa Y."/>
            <person name="Tettelin H."/>
        </authorList>
    </citation>
    <scope>NUCLEOTIDE SEQUENCE [LARGE SCALE GENOMIC DNA]</scope>
    <source>
        <strain>HZ</strain>
    </source>
</reference>
<name>TRHO_ANAPZ</name>
<evidence type="ECO:0000255" key="1">
    <source>
        <dbReference type="HAMAP-Rule" id="MF_00469"/>
    </source>
</evidence>
<keyword id="KW-0560">Oxidoreductase</keyword>
<keyword id="KW-0819">tRNA processing</keyword>
<comment type="function">
    <text evidence="1">Catalyzes oxygen-dependent 5-hydroxyuridine (ho5U) modification at position 34 in tRNAs.</text>
</comment>
<comment type="catalytic activity">
    <reaction evidence="1">
        <text>uridine(34) in tRNA + AH2 + O2 = 5-hydroxyuridine(34) in tRNA + A + H2O</text>
        <dbReference type="Rhea" id="RHEA:64224"/>
        <dbReference type="Rhea" id="RHEA-COMP:11727"/>
        <dbReference type="Rhea" id="RHEA-COMP:13381"/>
        <dbReference type="ChEBI" id="CHEBI:13193"/>
        <dbReference type="ChEBI" id="CHEBI:15377"/>
        <dbReference type="ChEBI" id="CHEBI:15379"/>
        <dbReference type="ChEBI" id="CHEBI:17499"/>
        <dbReference type="ChEBI" id="CHEBI:65315"/>
        <dbReference type="ChEBI" id="CHEBI:136877"/>
    </reaction>
</comment>
<comment type="similarity">
    <text evidence="1">Belongs to the TrhO family.</text>
</comment>
<gene>
    <name evidence="1" type="primary">trhO</name>
    <name type="ordered locus">APH_0962</name>
</gene>
<dbReference type="EC" id="1.14.-.-" evidence="1"/>
<dbReference type="EMBL" id="CP000235">
    <property type="protein sequence ID" value="ABD44390.1"/>
    <property type="molecule type" value="Genomic_DNA"/>
</dbReference>
<dbReference type="SMR" id="Q2GJC1"/>
<dbReference type="STRING" id="212042.APH_0962"/>
<dbReference type="PaxDb" id="212042-APH_0962"/>
<dbReference type="EnsemblBacteria" id="ABD44390">
    <property type="protein sequence ID" value="ABD44390"/>
    <property type="gene ID" value="APH_0962"/>
</dbReference>
<dbReference type="KEGG" id="aph:APH_0962"/>
<dbReference type="eggNOG" id="COG1054">
    <property type="taxonomic scope" value="Bacteria"/>
</dbReference>
<dbReference type="HOGENOM" id="CLU_038878_0_1_5"/>
<dbReference type="Proteomes" id="UP000001943">
    <property type="component" value="Chromosome"/>
</dbReference>
<dbReference type="GO" id="GO:0016705">
    <property type="term" value="F:oxidoreductase activity, acting on paired donors, with incorporation or reduction of molecular oxygen"/>
    <property type="evidence" value="ECO:0007669"/>
    <property type="project" value="UniProtKB-UniRule"/>
</dbReference>
<dbReference type="GO" id="GO:0006400">
    <property type="term" value="P:tRNA modification"/>
    <property type="evidence" value="ECO:0007669"/>
    <property type="project" value="UniProtKB-UniRule"/>
</dbReference>
<dbReference type="CDD" id="cd01518">
    <property type="entry name" value="RHOD_YceA"/>
    <property type="match status" value="1"/>
</dbReference>
<dbReference type="Gene3D" id="3.30.70.100">
    <property type="match status" value="1"/>
</dbReference>
<dbReference type="Gene3D" id="3.40.250.10">
    <property type="entry name" value="Rhodanese-like domain"/>
    <property type="match status" value="1"/>
</dbReference>
<dbReference type="HAMAP" id="MF_00469">
    <property type="entry name" value="TrhO"/>
    <property type="match status" value="1"/>
</dbReference>
<dbReference type="InterPro" id="IPR001763">
    <property type="entry name" value="Rhodanese-like_dom"/>
</dbReference>
<dbReference type="InterPro" id="IPR036873">
    <property type="entry name" value="Rhodanese-like_dom_sf"/>
</dbReference>
<dbReference type="InterPro" id="IPR020936">
    <property type="entry name" value="TrhO"/>
</dbReference>
<dbReference type="InterPro" id="IPR040503">
    <property type="entry name" value="TRHO_N"/>
</dbReference>
<dbReference type="NCBIfam" id="NF001136">
    <property type="entry name" value="PRK00142.1-4"/>
    <property type="match status" value="1"/>
</dbReference>
<dbReference type="PANTHER" id="PTHR43268:SF3">
    <property type="entry name" value="RHODANESE-LIKE DOMAIN-CONTAINING PROTEIN 7-RELATED"/>
    <property type="match status" value="1"/>
</dbReference>
<dbReference type="PANTHER" id="PTHR43268">
    <property type="entry name" value="THIOSULFATE SULFURTRANSFERASE/RHODANESE-LIKE DOMAIN-CONTAINING PROTEIN 2"/>
    <property type="match status" value="1"/>
</dbReference>
<dbReference type="Pfam" id="PF00581">
    <property type="entry name" value="Rhodanese"/>
    <property type="match status" value="1"/>
</dbReference>
<dbReference type="Pfam" id="PF17773">
    <property type="entry name" value="UPF0176_N"/>
    <property type="match status" value="1"/>
</dbReference>
<dbReference type="SMART" id="SM00450">
    <property type="entry name" value="RHOD"/>
    <property type="match status" value="1"/>
</dbReference>
<dbReference type="SUPFAM" id="SSF52821">
    <property type="entry name" value="Rhodanese/Cell cycle control phosphatase"/>
    <property type="match status" value="1"/>
</dbReference>
<dbReference type="PROSITE" id="PS50206">
    <property type="entry name" value="RHODANESE_3"/>
    <property type="match status" value="1"/>
</dbReference>
<sequence length="279" mass="31628">MLMSMGFVVAAFYRFVHLHNYYDMRSVILEFCQEHGIKGTVILAEQGINATISGERDAINKFFSFLDLDHRLADMKYHESYSSRLPFSKMKVRLKKEVVRLGIDDFDCSSMRGEYVDPKAWNDLITKPGMHVIDTRNDYEIKFGRFKHSINPGTTSFREFPDWARKWAEGKDKDVGVAMYCTGGIRCEKSTAFLKSLGFENVYHLKGGILNYLQSVKGADSLWEGDCFVFDERVAVDNNIAPSEDIKCVKCFGKVDEADLRSVSKGHIVCGACKSADVS</sequence>
<accession>Q2GJC1</accession>
<organism>
    <name type="scientific">Anaplasma phagocytophilum (strain HZ)</name>
    <dbReference type="NCBI Taxonomy" id="212042"/>
    <lineage>
        <taxon>Bacteria</taxon>
        <taxon>Pseudomonadati</taxon>
        <taxon>Pseudomonadota</taxon>
        <taxon>Alphaproteobacteria</taxon>
        <taxon>Rickettsiales</taxon>
        <taxon>Anaplasmataceae</taxon>
        <taxon>Anaplasma</taxon>
        <taxon>phagocytophilum group</taxon>
    </lineage>
</organism>
<proteinExistence type="inferred from homology"/>
<protein>
    <recommendedName>
        <fullName evidence="1">tRNA uridine(34) hydroxylase</fullName>
        <ecNumber evidence="1">1.14.-.-</ecNumber>
    </recommendedName>
    <alternativeName>
        <fullName evidence="1">tRNA hydroxylation protein O</fullName>
    </alternativeName>
</protein>